<name>MTL26_XENLA</name>
<reference key="1">
    <citation type="submission" date="2005-06" db="EMBL/GenBank/DDBJ databases">
        <authorList>
            <consortium name="NIH - Xenopus Gene Collection (XGC) project"/>
        </authorList>
    </citation>
    <scope>NUCLEOTIDE SEQUENCE [LARGE SCALE MRNA]</scope>
    <source>
        <tissue>Egg</tissue>
    </source>
</reference>
<sequence>MLVATAADRNKDPILEVLRQYVDPAAPKVRALEVASGTGQHCAHFARALPNLYLVPSELDPRSLQSISAYISHWSLSNVEQPRTLDVSKSWETWGFKPNSLQLIICINMIHISEPSCTQGLFKGAGHLLQPGGVLFTYGPYSVNGILTPQSNVDFNLSLKSRNPAWGVWDTSDLQNLATACGMSLERMVDLPANNKCLIFRKK</sequence>
<protein>
    <recommendedName>
        <fullName evidence="1">Methyltransferase-like 26</fullName>
    </recommendedName>
</protein>
<proteinExistence type="evidence at transcript level"/>
<keyword id="KW-1185">Reference proteome</keyword>
<accession>Q4V7T1</accession>
<evidence type="ECO:0000250" key="1">
    <source>
        <dbReference type="UniProtKB" id="Q96S19"/>
    </source>
</evidence>
<evidence type="ECO:0000305" key="2"/>
<comment type="similarity">
    <text evidence="2">Belongs to the UPF0585 family.</text>
</comment>
<gene>
    <name evidence="1" type="primary">mettl26</name>
</gene>
<dbReference type="EMBL" id="BC097735">
    <property type="protein sequence ID" value="AAH97735.1"/>
    <property type="molecule type" value="mRNA"/>
</dbReference>
<dbReference type="RefSeq" id="NP_001089497.1">
    <property type="nucleotide sequence ID" value="NM_001096028.1"/>
</dbReference>
<dbReference type="SMR" id="Q4V7T1"/>
<dbReference type="DNASU" id="734549"/>
<dbReference type="GeneID" id="734549"/>
<dbReference type="KEGG" id="xla:734549"/>
<dbReference type="AGR" id="Xenbase:XB-GENE-981700"/>
<dbReference type="CTD" id="734549"/>
<dbReference type="Xenbase" id="XB-GENE-981700">
    <property type="gene designation" value="mettl26.L"/>
</dbReference>
<dbReference type="OrthoDB" id="10258744at2759"/>
<dbReference type="Proteomes" id="UP000186698">
    <property type="component" value="Chromosome 9_10L"/>
</dbReference>
<dbReference type="Bgee" id="734549">
    <property type="expression patterns" value="Expressed in stomach and 19 other cell types or tissues"/>
</dbReference>
<dbReference type="CDD" id="cd02440">
    <property type="entry name" value="AdoMet_MTases"/>
    <property type="match status" value="1"/>
</dbReference>
<dbReference type="Gene3D" id="3.40.50.150">
    <property type="entry name" value="Vaccinia Virus protein VP39"/>
    <property type="match status" value="1"/>
</dbReference>
<dbReference type="InterPro" id="IPR010342">
    <property type="entry name" value="DUF938"/>
</dbReference>
<dbReference type="InterPro" id="IPR029063">
    <property type="entry name" value="SAM-dependent_MTases_sf"/>
</dbReference>
<dbReference type="PANTHER" id="PTHR20974:SF2">
    <property type="entry name" value="METHYLTRANSFERASE-LIKE 26"/>
    <property type="match status" value="1"/>
</dbReference>
<dbReference type="PANTHER" id="PTHR20974">
    <property type="entry name" value="UPF0585 PROTEIN CG18661"/>
    <property type="match status" value="1"/>
</dbReference>
<dbReference type="Pfam" id="PF06080">
    <property type="entry name" value="DUF938"/>
    <property type="match status" value="1"/>
</dbReference>
<dbReference type="SUPFAM" id="SSF53335">
    <property type="entry name" value="S-adenosyl-L-methionine-dependent methyltransferases"/>
    <property type="match status" value="1"/>
</dbReference>
<organism>
    <name type="scientific">Xenopus laevis</name>
    <name type="common">African clawed frog</name>
    <dbReference type="NCBI Taxonomy" id="8355"/>
    <lineage>
        <taxon>Eukaryota</taxon>
        <taxon>Metazoa</taxon>
        <taxon>Chordata</taxon>
        <taxon>Craniata</taxon>
        <taxon>Vertebrata</taxon>
        <taxon>Euteleostomi</taxon>
        <taxon>Amphibia</taxon>
        <taxon>Batrachia</taxon>
        <taxon>Anura</taxon>
        <taxon>Pipoidea</taxon>
        <taxon>Pipidae</taxon>
        <taxon>Xenopodinae</taxon>
        <taxon>Xenopus</taxon>
        <taxon>Xenopus</taxon>
    </lineage>
</organism>
<feature type="chain" id="PRO_0000337119" description="Methyltransferase-like 26">
    <location>
        <begin position="1"/>
        <end position="203"/>
    </location>
</feature>